<dbReference type="EMBL" id="CP001078">
    <property type="protein sequence ID" value="ACD52638.1"/>
    <property type="molecule type" value="Genomic_DNA"/>
</dbReference>
<dbReference type="SMR" id="B2V479"/>
<dbReference type="KEGG" id="cbt:CLH_2088"/>
<dbReference type="HOGENOM" id="CLU_061989_0_1_9"/>
<dbReference type="GO" id="GO:0005829">
    <property type="term" value="C:cytosol"/>
    <property type="evidence" value="ECO:0007669"/>
    <property type="project" value="TreeGrafter"/>
</dbReference>
<dbReference type="GO" id="GO:0033194">
    <property type="term" value="P:response to hydroperoxide"/>
    <property type="evidence" value="ECO:0007669"/>
    <property type="project" value="TreeGrafter"/>
</dbReference>
<dbReference type="HAMAP" id="MF_00652">
    <property type="entry name" value="UPF0246"/>
    <property type="match status" value="1"/>
</dbReference>
<dbReference type="InterPro" id="IPR005583">
    <property type="entry name" value="YaaA"/>
</dbReference>
<dbReference type="NCBIfam" id="NF002542">
    <property type="entry name" value="PRK02101.1-3"/>
    <property type="match status" value="1"/>
</dbReference>
<dbReference type="PANTHER" id="PTHR30283:SF4">
    <property type="entry name" value="PEROXIDE STRESS RESISTANCE PROTEIN YAAA"/>
    <property type="match status" value="1"/>
</dbReference>
<dbReference type="PANTHER" id="PTHR30283">
    <property type="entry name" value="PEROXIDE STRESS RESPONSE PROTEIN YAAA"/>
    <property type="match status" value="1"/>
</dbReference>
<dbReference type="Pfam" id="PF03883">
    <property type="entry name" value="H2O2_YaaD"/>
    <property type="match status" value="1"/>
</dbReference>
<sequence length="257" mass="29811">MLVVISPAKTLDFNKINETLPMTNPKFLKEARVLVEELKNYDSYSLGKLMKTSDKLSLLNKNRFDIWNESFDNSRQCLIAFKGEVFKGIDVGSFNVEDLFYTNDHLRILSGLYGALNPFDGVNPYRLEMGTKLSFNNYKNLYDYWGDKLKYKIIEDIKSTGDNMLVNLASYEYFKSIEGIDLIDTSVNIVTPIFKEYRNGEYKIVTMKAKKARGLMVSFIMKNKINNIEDLKKFDLEGYLYNEDLSNNNELVFTLEN</sequence>
<evidence type="ECO:0000255" key="1">
    <source>
        <dbReference type="HAMAP-Rule" id="MF_00652"/>
    </source>
</evidence>
<proteinExistence type="inferred from homology"/>
<accession>B2V479</accession>
<gene>
    <name type="ordered locus">CLH_2088</name>
</gene>
<name>Y2088_CLOBA</name>
<reference key="1">
    <citation type="submission" date="2008-05" db="EMBL/GenBank/DDBJ databases">
        <title>Complete genome sequence of Clostridium botulinum E3 str. Alaska E43.</title>
        <authorList>
            <person name="Brinkac L.M."/>
            <person name="Brown J.L."/>
            <person name="Bruce D."/>
            <person name="Detter C."/>
            <person name="Munk C."/>
            <person name="Smith L.A."/>
            <person name="Smith T.J."/>
            <person name="Sutton G."/>
            <person name="Brettin T.S."/>
        </authorList>
    </citation>
    <scope>NUCLEOTIDE SEQUENCE [LARGE SCALE GENOMIC DNA]</scope>
    <source>
        <strain>Alaska E43 / Type E3</strain>
    </source>
</reference>
<feature type="chain" id="PRO_1000131108" description="UPF0246 protein CLH_2088">
    <location>
        <begin position="1"/>
        <end position="257"/>
    </location>
</feature>
<comment type="similarity">
    <text evidence="1">Belongs to the UPF0246 family.</text>
</comment>
<protein>
    <recommendedName>
        <fullName evidence="1">UPF0246 protein CLH_2088</fullName>
    </recommendedName>
</protein>
<organism>
    <name type="scientific">Clostridium botulinum (strain Alaska E43 / Type E3)</name>
    <dbReference type="NCBI Taxonomy" id="508767"/>
    <lineage>
        <taxon>Bacteria</taxon>
        <taxon>Bacillati</taxon>
        <taxon>Bacillota</taxon>
        <taxon>Clostridia</taxon>
        <taxon>Eubacteriales</taxon>
        <taxon>Clostridiaceae</taxon>
        <taxon>Clostridium</taxon>
    </lineage>
</organism>